<feature type="signal peptide" evidence="5">
    <location>
        <begin position="1"/>
        <end position="26"/>
    </location>
</feature>
<feature type="chain" id="PRO_0000030951" description="Inactive ribonuclease-like protein 9">
    <location>
        <begin position="27"/>
        <end position="205"/>
    </location>
</feature>
<feature type="glycosylation site" description="N-linked (GlcNAc...) asparagine" evidence="2">
    <location>
        <position position="131"/>
    </location>
</feature>
<feature type="glycosylation site" description="N-linked (GlcNAc...) asparagine" evidence="2">
    <location>
        <position position="143"/>
    </location>
</feature>
<feature type="disulfide bond" evidence="1">
    <location>
        <begin position="116"/>
        <end position="168"/>
    </location>
</feature>
<feature type="disulfide bond" evidence="1">
    <location>
        <begin position="123"/>
        <end position="130"/>
    </location>
</feature>
<feature type="splice variant" id="VSP_041856" description="In isoform 2." evidence="7">
    <original>M</original>
    <variation>MSAGKM</variation>
    <location>
        <position position="1"/>
    </location>
</feature>
<feature type="sequence variant" id="VAR_052197" description="In dbSNP:rs12590446." evidence="3 4 6">
    <original>F</original>
    <variation>S</variation>
    <location>
        <position position="148"/>
    </location>
</feature>
<feature type="sequence variant" id="VAR_034473" description="In dbSNP:rs1243647." evidence="3 4 6">
    <original>S</original>
    <variation>P</variation>
    <location>
        <position position="204"/>
    </location>
</feature>
<keyword id="KW-0025">Alternative splicing</keyword>
<keyword id="KW-0903">Direct protein sequencing</keyword>
<keyword id="KW-1015">Disulfide bond</keyword>
<keyword id="KW-0325">Glycoprotein</keyword>
<keyword id="KW-1185">Reference proteome</keyword>
<keyword id="KW-0964">Secreted</keyword>
<keyword id="KW-0732">Signal</keyword>
<accession>P60153</accession>
<accession>A2RQR8</accession>
<accession>A8QJS1</accession>
<accession>Q5GAN7</accession>
<accession>Q6KG53</accession>
<gene>
    <name type="primary">RNASE9</name>
</gene>
<proteinExistence type="evidence at protein level"/>
<comment type="function">
    <text evidence="4 5">Does not exhibit any ribonuclease activity.</text>
</comment>
<comment type="subcellular location">
    <subcellularLocation>
        <location evidence="8">Secreted</location>
    </subcellularLocation>
</comment>
<comment type="alternative products">
    <event type="alternative splicing"/>
    <isoform>
        <id>P60153-1</id>
        <name>1</name>
        <name>alpha1</name>
        <name>alpha2</name>
        <name>alpha12</name>
        <name>beta2</name>
        <name>beta12</name>
        <sequence type="displayed"/>
    </isoform>
    <isoform>
        <id>P60153-2</id>
        <name>2</name>
        <name>alpha23</name>
        <name>alpha123</name>
        <sequence type="described" ref="VSP_041856"/>
    </isoform>
</comment>
<comment type="tissue specificity">
    <text evidence="4 5">At the mRNA level, widely expressed (PubMed:18992174). At protein level, restricted to epididymis (PubMed:19137000). Expressed in spermatozoa (sperm head and neck), with higher levels on ejaculated and epididymal sperm than on testicular sperm (at protein level). Expressed in the epithelial cells of the epididymal tubule (at protein level). Not detected in muscle.</text>
</comment>
<comment type="similarity">
    <text evidence="8">Belongs to the pancreatic ribonuclease family.</text>
</comment>
<evidence type="ECO:0000250" key="1"/>
<evidence type="ECO:0000255" key="2"/>
<evidence type="ECO:0000269" key="3">
    <source>
    </source>
</evidence>
<evidence type="ECO:0000269" key="4">
    <source>
    </source>
</evidence>
<evidence type="ECO:0000269" key="5">
    <source>
    </source>
</evidence>
<evidence type="ECO:0000269" key="6">
    <source ref="3"/>
</evidence>
<evidence type="ECO:0000303" key="7">
    <source ref="3"/>
</evidence>
<evidence type="ECO:0000305" key="8"/>
<organism>
    <name type="scientific">Homo sapiens</name>
    <name type="common">Human</name>
    <dbReference type="NCBI Taxonomy" id="9606"/>
    <lineage>
        <taxon>Eukaryota</taxon>
        <taxon>Metazoa</taxon>
        <taxon>Chordata</taxon>
        <taxon>Craniata</taxon>
        <taxon>Vertebrata</taxon>
        <taxon>Euteleostomi</taxon>
        <taxon>Mammalia</taxon>
        <taxon>Eutheria</taxon>
        <taxon>Euarchontoglires</taxon>
        <taxon>Primates</taxon>
        <taxon>Haplorrhini</taxon>
        <taxon>Catarrhini</taxon>
        <taxon>Hominidae</taxon>
        <taxon>Homo</taxon>
    </lineage>
</organism>
<reference key="1">
    <citation type="journal article" date="2005" name="Genomics">
        <title>The ribonuclease A superfamily of mammals and birds: identifying new members and tracing evolutionary histories.</title>
        <authorList>
            <person name="Cho S."/>
            <person name="Beintema J.J."/>
            <person name="Zhang J."/>
        </authorList>
    </citation>
    <scope>NUCLEOTIDE SEQUENCE [MRNA] (ISOFORM 1)</scope>
</reference>
<reference key="2">
    <citation type="journal article" date="2008" name="BMC Res. Notes">
        <title>Cloning, expression and location of RNase9 in human epididymis.</title>
        <authorList>
            <person name="Liu J."/>
            <person name="Li J."/>
            <person name="Wang H."/>
            <person name="Zhang C."/>
            <person name="Li N."/>
            <person name="Lin Y."/>
            <person name="Liu J."/>
            <person name="Wang W."/>
        </authorList>
    </citation>
    <scope>NUCLEOTIDE SEQUENCE [MRNA] (ISOFORM 1)</scope>
    <scope>VARIANTS SER-148 AND PRO-204</scope>
    <scope>FUNCTION</scope>
    <scope>TISSUE SPECIFICITY</scope>
    <source>
        <tissue>Epididymis</tissue>
    </source>
</reference>
<reference key="3">
    <citation type="submission" date="2006-10" db="EMBL/GenBank/DDBJ databases">
        <title>Human RNASE9 transcript variants.</title>
        <authorList>
            <person name="Liu Q."/>
            <person name="Hamil K.G."/>
            <person name="Gao B."/>
            <person name="French F.S."/>
            <person name="Hall S.H."/>
            <person name="Zhang Y.-L."/>
        </authorList>
    </citation>
    <scope>NUCLEOTIDE SEQUENCE [MRNA] (ISOFORMS 1 AND 2)</scope>
    <scope>VARIANTS SER-148 AND PRO-204</scope>
</reference>
<reference key="4">
    <citation type="journal article" date="2003" name="Nature">
        <title>The DNA sequence and analysis of human chromosome 14.</title>
        <authorList>
            <person name="Heilig R."/>
            <person name="Eckenberg R."/>
            <person name="Petit J.-L."/>
            <person name="Fonknechten N."/>
            <person name="Da Silva C."/>
            <person name="Cattolico L."/>
            <person name="Levy M."/>
            <person name="Barbe V."/>
            <person name="De Berardinis V."/>
            <person name="Ureta-Vidal A."/>
            <person name="Pelletier E."/>
            <person name="Vico V."/>
            <person name="Anthouard V."/>
            <person name="Rowen L."/>
            <person name="Madan A."/>
            <person name="Qin S."/>
            <person name="Sun H."/>
            <person name="Du H."/>
            <person name="Pepin K."/>
            <person name="Artiguenave F."/>
            <person name="Robert C."/>
            <person name="Cruaud C."/>
            <person name="Bruels T."/>
            <person name="Jaillon O."/>
            <person name="Friedlander L."/>
            <person name="Samson G."/>
            <person name="Brottier P."/>
            <person name="Cure S."/>
            <person name="Segurens B."/>
            <person name="Aniere F."/>
            <person name="Samain S."/>
            <person name="Crespeau H."/>
            <person name="Abbasi N."/>
            <person name="Aiach N."/>
            <person name="Boscus D."/>
            <person name="Dickhoff R."/>
            <person name="Dors M."/>
            <person name="Dubois I."/>
            <person name="Friedman C."/>
            <person name="Gouyvenoux M."/>
            <person name="James R."/>
            <person name="Madan A."/>
            <person name="Mairey-Estrada B."/>
            <person name="Mangenot S."/>
            <person name="Martins N."/>
            <person name="Menard M."/>
            <person name="Oztas S."/>
            <person name="Ratcliffe A."/>
            <person name="Shaffer T."/>
            <person name="Trask B."/>
            <person name="Vacherie B."/>
            <person name="Bellemere C."/>
            <person name="Belser C."/>
            <person name="Besnard-Gonnet M."/>
            <person name="Bartol-Mavel D."/>
            <person name="Boutard M."/>
            <person name="Briez-Silla S."/>
            <person name="Combette S."/>
            <person name="Dufosse-Laurent V."/>
            <person name="Ferron C."/>
            <person name="Lechaplais C."/>
            <person name="Louesse C."/>
            <person name="Muselet D."/>
            <person name="Magdelenat G."/>
            <person name="Pateau E."/>
            <person name="Petit E."/>
            <person name="Sirvain-Trukniewicz P."/>
            <person name="Trybou A."/>
            <person name="Vega-Czarny N."/>
            <person name="Bataille E."/>
            <person name="Bluet E."/>
            <person name="Bordelais I."/>
            <person name="Dubois M."/>
            <person name="Dumont C."/>
            <person name="Guerin T."/>
            <person name="Haffray S."/>
            <person name="Hammadi R."/>
            <person name="Muanga J."/>
            <person name="Pellouin V."/>
            <person name="Robert D."/>
            <person name="Wunderle E."/>
            <person name="Gauguet G."/>
            <person name="Roy A."/>
            <person name="Sainte-Marthe L."/>
            <person name="Verdier J."/>
            <person name="Verdier-Discala C."/>
            <person name="Hillier L.W."/>
            <person name="Fulton L."/>
            <person name="McPherson J."/>
            <person name="Matsuda F."/>
            <person name="Wilson R."/>
            <person name="Scarpelli C."/>
            <person name="Gyapay G."/>
            <person name="Wincker P."/>
            <person name="Saurin W."/>
            <person name="Quetier F."/>
            <person name="Waterston R."/>
            <person name="Hood L."/>
            <person name="Weissenbach J."/>
        </authorList>
    </citation>
    <scope>NUCLEOTIDE SEQUENCE [LARGE SCALE GENOMIC DNA]</scope>
</reference>
<reference key="5">
    <citation type="journal article" date="2004" name="Genome Res.">
        <title>The status, quality, and expansion of the NIH full-length cDNA project: the Mammalian Gene Collection (MGC).</title>
        <authorList>
            <consortium name="The MGC Project Team"/>
        </authorList>
    </citation>
    <scope>NUCLEOTIDE SEQUENCE [LARGE SCALE MRNA] (ISOFORM 1)</scope>
    <scope>VARIANTS SER-148 AND PRO-204</scope>
</reference>
<reference key="6">
    <citation type="journal article" date="2009" name="Asian J. Androl.">
        <title>Human ribonuclease 9, a member of ribonuclease A superfamily, specifically expressed in epididymis, is a novel sperm-binding protein.</title>
        <authorList>
            <person name="Cheng G.Z."/>
            <person name="Li J.Y."/>
            <person name="Li F."/>
            <person name="Wang H.Y."/>
            <person name="Shi G.X."/>
        </authorList>
    </citation>
    <scope>PROTEIN SEQUENCE OF 27-36</scope>
    <scope>FUNCTION</scope>
    <scope>TISSUE SPECIFICITY</scope>
    <scope>SIGNAL SEQUENCE CLEAVAGE SITE</scope>
</reference>
<sequence length="205" mass="24307">MMRTLITTHPLPLLLLPQQLLQLVQFQEVDTDFDFPEEDKKEEFEECLEKFFSTGPARPPTKEKVKRRVLIEPGMPLNHIEYCNHEIMGKNVYYKHRWVAEHYFLLMQYDELQKICYNRFVPCKNGIRKCNRSKGLVEGVYCNLTEAFEIPACKYESLYRKGYVLITCSWQNEMQKRIPHTINDLVEPPEHRSFLSEDGVFVISP</sequence>
<dbReference type="EMBL" id="AY665804">
    <property type="protein sequence ID" value="AAV87182.1"/>
    <property type="molecule type" value="mRNA"/>
</dbReference>
<dbReference type="EMBL" id="EU414264">
    <property type="protein sequence ID" value="ACA49544.1"/>
    <property type="molecule type" value="mRNA"/>
</dbReference>
<dbReference type="EMBL" id="AF382949">
    <property type="protein sequence ID" value="AAQ02792.1"/>
    <property type="molecule type" value="mRNA"/>
</dbReference>
<dbReference type="EMBL" id="AY907670">
    <property type="protein sequence ID" value="AAX86045.1"/>
    <property type="molecule type" value="mRNA"/>
</dbReference>
<dbReference type="EMBL" id="EF061296">
    <property type="protein sequence ID" value="ABP97451.1"/>
    <property type="molecule type" value="mRNA"/>
</dbReference>
<dbReference type="EMBL" id="EF061297">
    <property type="protein sequence ID" value="ABP97452.1"/>
    <property type="molecule type" value="mRNA"/>
</dbReference>
<dbReference type="EMBL" id="EF061298">
    <property type="protein sequence ID" value="ABP97453.1"/>
    <property type="molecule type" value="mRNA"/>
</dbReference>
<dbReference type="EMBL" id="EF061299">
    <property type="protein sequence ID" value="ABP97454.1"/>
    <property type="molecule type" value="mRNA"/>
</dbReference>
<dbReference type="EMBL" id="EF061300">
    <property type="protein sequence ID" value="ABP97455.1"/>
    <property type="molecule type" value="mRNA"/>
</dbReference>
<dbReference type="EMBL" id="EF061301">
    <property type="protein sequence ID" value="ABP97456.1"/>
    <property type="molecule type" value="mRNA"/>
</dbReference>
<dbReference type="EMBL" id="EF061302">
    <property type="protein sequence ID" value="ABP97457.1"/>
    <property type="molecule type" value="mRNA"/>
</dbReference>
<dbReference type="EMBL" id="EF061303">
    <property type="protein sequence ID" value="ABP97458.1"/>
    <property type="molecule type" value="mRNA"/>
</dbReference>
<dbReference type="EMBL" id="EF061304">
    <property type="protein sequence ID" value="ABP97459.1"/>
    <property type="molecule type" value="mRNA"/>
</dbReference>
<dbReference type="EMBL" id="AL163195">
    <property type="status" value="NOT_ANNOTATED_CDS"/>
    <property type="molecule type" value="Genomic_DNA"/>
</dbReference>
<dbReference type="EMBL" id="BC130311">
    <property type="protein sequence ID" value="AAI30312.1"/>
    <property type="molecule type" value="mRNA"/>
</dbReference>
<dbReference type="EMBL" id="BC130313">
    <property type="protein sequence ID" value="AAI30314.1"/>
    <property type="molecule type" value="mRNA"/>
</dbReference>
<dbReference type="CCDS" id="CCDS53883.1">
    <molecule id="P60153-2"/>
</dbReference>
<dbReference type="CCDS" id="CCDS55904.1">
    <molecule id="P60153-2"/>
</dbReference>
<dbReference type="RefSeq" id="NP_001001673.2">
    <property type="nucleotide sequence ID" value="NM_001001673.3"/>
</dbReference>
<dbReference type="RefSeq" id="NP_001103826.1">
    <property type="nucleotide sequence ID" value="NM_001110356.1"/>
</dbReference>
<dbReference type="RefSeq" id="NP_001103827.1">
    <property type="nucleotide sequence ID" value="NM_001110357.1"/>
</dbReference>
<dbReference type="RefSeq" id="NP_001103828.1">
    <molecule id="P60153-2"/>
    <property type="nucleotide sequence ID" value="NM_001110358.1"/>
</dbReference>
<dbReference type="RefSeq" id="NP_001103829.1">
    <molecule id="P60153-2"/>
    <property type="nucleotide sequence ID" value="NM_001110359.1"/>
</dbReference>
<dbReference type="RefSeq" id="NP_001103830.1">
    <molecule id="P60153-2"/>
    <property type="nucleotide sequence ID" value="NM_001110360.1"/>
</dbReference>
<dbReference type="RefSeq" id="NP_001103831.1">
    <molecule id="P60153-2"/>
    <property type="nucleotide sequence ID" value="NM_001110361.1"/>
</dbReference>
<dbReference type="RefSeq" id="NP_001276039.1">
    <property type="nucleotide sequence ID" value="NM_001289110.1"/>
</dbReference>
<dbReference type="SMR" id="P60153"/>
<dbReference type="BioGRID" id="133570">
    <property type="interactions" value="3"/>
</dbReference>
<dbReference type="FunCoup" id="P60153">
    <property type="interactions" value="7"/>
</dbReference>
<dbReference type="IntAct" id="P60153">
    <property type="interactions" value="3"/>
</dbReference>
<dbReference type="GlyCosmos" id="P60153">
    <property type="glycosylation" value="2 sites, No reported glycans"/>
</dbReference>
<dbReference type="GlyGen" id="P60153">
    <property type="glycosylation" value="2 sites"/>
</dbReference>
<dbReference type="iPTMnet" id="P60153"/>
<dbReference type="PhosphoSitePlus" id="P60153"/>
<dbReference type="BioMuta" id="RNASE9"/>
<dbReference type="DMDM" id="38605140"/>
<dbReference type="jPOST" id="P60153"/>
<dbReference type="PaxDb" id="9606-ENSP00000384683"/>
<dbReference type="Antibodypedia" id="175">
    <property type="antibodies" value="117 antibodies from 17 providers"/>
</dbReference>
<dbReference type="DNASU" id="390443"/>
<dbReference type="Ensembl" id="ENST00000338904.7">
    <molecule id="P60153-1"/>
    <property type="protein sequence ID" value="ENSP00000340162.3"/>
    <property type="gene ID" value="ENSG00000188655.11"/>
</dbReference>
<dbReference type="Ensembl" id="ENST00000404716.7">
    <molecule id="P60153-2"/>
    <property type="protein sequence ID" value="ENSP00000384683.3"/>
    <property type="gene ID" value="ENSG00000188655.11"/>
</dbReference>
<dbReference type="Ensembl" id="ENST00000429244.6">
    <molecule id="P60153-1"/>
    <property type="protein sequence ID" value="ENSP00000409504.2"/>
    <property type="gene ID" value="ENSG00000188655.11"/>
</dbReference>
<dbReference type="Ensembl" id="ENST00000553541.5">
    <molecule id="P60153-1"/>
    <property type="protein sequence ID" value="ENSP00000451285.1"/>
    <property type="gene ID" value="ENSG00000188655.11"/>
</dbReference>
<dbReference type="Ensembl" id="ENST00000553706.5">
    <molecule id="P60153-2"/>
    <property type="protein sequence ID" value="ENSP00000450570.1"/>
    <property type="gene ID" value="ENSG00000188655.11"/>
</dbReference>
<dbReference type="Ensembl" id="ENST00000555230.5">
    <molecule id="P60153-1"/>
    <property type="protein sequence ID" value="ENSP00000450800.1"/>
    <property type="gene ID" value="ENSG00000188655.11"/>
</dbReference>
<dbReference type="Ensembl" id="ENST00000556208.5">
    <molecule id="P60153-2"/>
    <property type="protein sequence ID" value="ENSP00000451160.1"/>
    <property type="gene ID" value="ENSG00000188655.11"/>
</dbReference>
<dbReference type="Ensembl" id="ENST00000557068.5">
    <molecule id="P60153-1"/>
    <property type="protein sequence ID" value="ENSP00000451565.1"/>
    <property type="gene ID" value="ENSG00000188655.11"/>
</dbReference>
<dbReference type="Ensembl" id="ENST00000557209.1">
    <molecule id="P60153-2"/>
    <property type="protein sequence ID" value="ENSP00000450987.1"/>
    <property type="gene ID" value="ENSG00000188655.11"/>
</dbReference>
<dbReference type="Ensembl" id="ENST00000611135.1">
    <molecule id="P60153-2"/>
    <property type="protein sequence ID" value="ENSP00000481786.1"/>
    <property type="gene ID" value="ENSG00000188655.11"/>
</dbReference>
<dbReference type="GeneID" id="390443"/>
<dbReference type="KEGG" id="hsa:390443"/>
<dbReference type="UCSC" id="uc001vxq.4">
    <molecule id="P60153-1"/>
    <property type="organism name" value="human"/>
</dbReference>
<dbReference type="AGR" id="HGNC:20673"/>
<dbReference type="CTD" id="390443"/>
<dbReference type="GeneCards" id="RNASE9"/>
<dbReference type="HGNC" id="HGNC:20673">
    <property type="gene designation" value="RNASE9"/>
</dbReference>
<dbReference type="HPA" id="ENSG00000188655">
    <property type="expression patterns" value="Tissue enriched (epididymis)"/>
</dbReference>
<dbReference type="MIM" id="614014">
    <property type="type" value="gene"/>
</dbReference>
<dbReference type="neXtProt" id="NX_P60153"/>
<dbReference type="OpenTargets" id="ENSG00000188655"/>
<dbReference type="PharmGKB" id="PA134887351"/>
<dbReference type="VEuPathDB" id="HostDB:ENSG00000188655"/>
<dbReference type="eggNOG" id="ENOG502TDU6">
    <property type="taxonomic scope" value="Eukaryota"/>
</dbReference>
<dbReference type="GeneTree" id="ENSGT00390000013952"/>
<dbReference type="HOGENOM" id="CLU_1464451_0_0_1"/>
<dbReference type="InParanoid" id="P60153"/>
<dbReference type="OrthoDB" id="9835306at2759"/>
<dbReference type="PAN-GO" id="P60153">
    <property type="GO annotations" value="1 GO annotation based on evolutionary models"/>
</dbReference>
<dbReference type="PhylomeDB" id="P60153"/>
<dbReference type="TreeFam" id="TF338401"/>
<dbReference type="PathwayCommons" id="P60153"/>
<dbReference type="SignaLink" id="P60153"/>
<dbReference type="BioGRID-ORCS" id="390443">
    <property type="hits" value="27 hits in 1136 CRISPR screens"/>
</dbReference>
<dbReference type="GenomeRNAi" id="390443"/>
<dbReference type="Pharos" id="P60153">
    <property type="development level" value="Tbio"/>
</dbReference>
<dbReference type="PRO" id="PR:P60153"/>
<dbReference type="Proteomes" id="UP000005640">
    <property type="component" value="Chromosome 14"/>
</dbReference>
<dbReference type="RNAct" id="P60153">
    <property type="molecule type" value="protein"/>
</dbReference>
<dbReference type="Bgee" id="ENSG00000188655">
    <property type="expression patterns" value="Expressed in skin of abdomen and 5 other cell types or tissues"/>
</dbReference>
<dbReference type="ExpressionAtlas" id="P60153">
    <property type="expression patterns" value="baseline and differential"/>
</dbReference>
<dbReference type="GO" id="GO:0005576">
    <property type="term" value="C:extracellular region"/>
    <property type="evidence" value="ECO:0007669"/>
    <property type="project" value="UniProtKB-SubCell"/>
</dbReference>
<dbReference type="GO" id="GO:0003676">
    <property type="term" value="F:nucleic acid binding"/>
    <property type="evidence" value="ECO:0007669"/>
    <property type="project" value="InterPro"/>
</dbReference>
<dbReference type="GO" id="GO:0050830">
    <property type="term" value="P:defense response to Gram-positive bacterium"/>
    <property type="evidence" value="ECO:0000318"/>
    <property type="project" value="GO_Central"/>
</dbReference>
<dbReference type="CDD" id="cd00163">
    <property type="entry name" value="RNase_A"/>
    <property type="match status" value="1"/>
</dbReference>
<dbReference type="FunFam" id="3.10.130.10:FF:000003">
    <property type="entry name" value="Inactive ribonuclease-like protein 9"/>
    <property type="match status" value="1"/>
</dbReference>
<dbReference type="Gene3D" id="3.10.130.10">
    <property type="entry name" value="Ribonuclease A-like domain"/>
    <property type="match status" value="1"/>
</dbReference>
<dbReference type="InterPro" id="IPR001427">
    <property type="entry name" value="RNaseA"/>
</dbReference>
<dbReference type="InterPro" id="IPR036816">
    <property type="entry name" value="RNaseA-like_dom_sf"/>
</dbReference>
<dbReference type="InterPro" id="IPR023412">
    <property type="entry name" value="RNaseA_domain"/>
</dbReference>
<dbReference type="PANTHER" id="PTHR11437:SF14">
    <property type="entry name" value="INACTIVE RIBONUCLEASE-LIKE PROTEIN 9"/>
    <property type="match status" value="1"/>
</dbReference>
<dbReference type="PANTHER" id="PTHR11437">
    <property type="entry name" value="RIBONUCLEASE"/>
    <property type="match status" value="1"/>
</dbReference>
<dbReference type="Pfam" id="PF00074">
    <property type="entry name" value="RnaseA"/>
    <property type="match status" value="1"/>
</dbReference>
<dbReference type="SUPFAM" id="SSF54076">
    <property type="entry name" value="RNase A-like"/>
    <property type="match status" value="1"/>
</dbReference>
<protein>
    <recommendedName>
        <fullName>Inactive ribonuclease-like protein 9</fullName>
    </recommendedName>
</protein>
<name>RNAS9_HUMAN</name>